<organism>
    <name type="scientific">Aquifex aeolicus (strain VF5)</name>
    <dbReference type="NCBI Taxonomy" id="224324"/>
    <lineage>
        <taxon>Bacteria</taxon>
        <taxon>Pseudomonadati</taxon>
        <taxon>Aquificota</taxon>
        <taxon>Aquificia</taxon>
        <taxon>Aquificales</taxon>
        <taxon>Aquificaceae</taxon>
        <taxon>Aquifex</taxon>
    </lineage>
</organism>
<proteinExistence type="predicted"/>
<keyword id="KW-1003">Cell membrane</keyword>
<keyword id="KW-0472">Membrane</keyword>
<keyword id="KW-1185">Reference proteome</keyword>
<keyword id="KW-0812">Transmembrane</keyword>
<keyword id="KW-1133">Transmembrane helix</keyword>
<protein>
    <recommendedName>
        <fullName>Uncharacterized protein aq_359</fullName>
    </recommendedName>
</protein>
<sequence length="356" mass="41807">MLLDRYLLSRFLGIFLNVSFVSVLLVSLYALLDFLVGFKEKRTDVALSYFLNILPLGFYYISFITLSISLILFLRKVFEKKMELTVQSFGISPLRFSLPVLLFSVFLSSTFLLGNEYAFPKLLGNLWFIEKNYKKKQEVKGFIKNFWFIKKENEVKTYYHVGNLNLSDGSLFNFYTMKVERKNLNPLEVLKVFSGVWKDKEIFIRSGEIYDFEKGKREKVFNKTFKLGLSIKEVELFSEKIDFLSLSEIFFLMQKSKKVGLNVDVYTGELFYRVMFSLSPVFISIFSLYLFFKHKVLSQVIPRFLVFIVILWLVILSPKILPQKANQPVLYSLIPIFLLILYSLKGVYDLRKGFRV</sequence>
<reference key="1">
    <citation type="journal article" date="1998" name="Nature">
        <title>The complete genome of the hyperthermophilic bacterium Aquifex aeolicus.</title>
        <authorList>
            <person name="Deckert G."/>
            <person name="Warren P.V."/>
            <person name="Gaasterland T."/>
            <person name="Young W.G."/>
            <person name="Lenox A.L."/>
            <person name="Graham D.E."/>
            <person name="Overbeek R."/>
            <person name="Snead M.A."/>
            <person name="Keller M."/>
            <person name="Aujay M."/>
            <person name="Huber R."/>
            <person name="Feldman R.A."/>
            <person name="Short J.M."/>
            <person name="Olsen G.J."/>
            <person name="Swanson R.V."/>
        </authorList>
    </citation>
    <scope>NUCLEOTIDE SEQUENCE [LARGE SCALE GENOMIC DNA]</scope>
    <source>
        <strain>VF5</strain>
    </source>
</reference>
<gene>
    <name type="ordered locus">aq_359</name>
</gene>
<name>Y359_AQUAE</name>
<feature type="chain" id="PRO_0000186853" description="Uncharacterized protein aq_359">
    <location>
        <begin position="1"/>
        <end position="356"/>
    </location>
</feature>
<feature type="transmembrane region" description="Helical" evidence="1">
    <location>
        <begin position="7"/>
        <end position="29"/>
    </location>
</feature>
<feature type="transmembrane region" description="Helical" evidence="1">
    <location>
        <begin position="49"/>
        <end position="71"/>
    </location>
</feature>
<feature type="transmembrane region" description="Helical" evidence="1">
    <location>
        <begin position="91"/>
        <end position="113"/>
    </location>
</feature>
<feature type="transmembrane region" description="Helical" evidence="1">
    <location>
        <begin position="270"/>
        <end position="292"/>
    </location>
</feature>
<feature type="transmembrane region" description="Helical" evidence="1">
    <location>
        <begin position="299"/>
        <end position="316"/>
    </location>
</feature>
<feature type="transmembrane region" description="Helical" evidence="1">
    <location>
        <begin position="329"/>
        <end position="348"/>
    </location>
</feature>
<dbReference type="EMBL" id="AE000657">
    <property type="protein sequence ID" value="AAC06646.1"/>
    <property type="molecule type" value="Genomic_DNA"/>
</dbReference>
<dbReference type="PIR" id="A70332">
    <property type="entry name" value="A70332"/>
</dbReference>
<dbReference type="RefSeq" id="NP_213245.1">
    <property type="nucleotide sequence ID" value="NC_000918.1"/>
</dbReference>
<dbReference type="RefSeq" id="WP_010880183.1">
    <property type="nucleotide sequence ID" value="NC_000918.1"/>
</dbReference>
<dbReference type="SMR" id="O66685"/>
<dbReference type="STRING" id="224324.aq_359"/>
<dbReference type="EnsemblBacteria" id="AAC06646">
    <property type="protein sequence ID" value="AAC06646"/>
    <property type="gene ID" value="aq_359"/>
</dbReference>
<dbReference type="KEGG" id="aae:aq_359"/>
<dbReference type="eggNOG" id="COG0795">
    <property type="taxonomic scope" value="Bacteria"/>
</dbReference>
<dbReference type="HOGENOM" id="CLU_787031_0_0_0"/>
<dbReference type="InParanoid" id="O66685"/>
<dbReference type="OrthoDB" id="12137at2"/>
<dbReference type="Proteomes" id="UP000000798">
    <property type="component" value="Chromosome"/>
</dbReference>
<dbReference type="GO" id="GO:0043190">
    <property type="term" value="C:ATP-binding cassette (ABC) transporter complex"/>
    <property type="evidence" value="ECO:0000318"/>
    <property type="project" value="GO_Central"/>
</dbReference>
<dbReference type="GO" id="GO:0015920">
    <property type="term" value="P:lipopolysaccharide transport"/>
    <property type="evidence" value="ECO:0000318"/>
    <property type="project" value="GO_Central"/>
</dbReference>
<dbReference type="InterPro" id="IPR005495">
    <property type="entry name" value="LptG/LptF_permease"/>
</dbReference>
<dbReference type="PANTHER" id="PTHR33529">
    <property type="entry name" value="SLR0882 PROTEIN-RELATED"/>
    <property type="match status" value="1"/>
</dbReference>
<dbReference type="PANTHER" id="PTHR33529:SF6">
    <property type="entry name" value="YJGP_YJGQ FAMILY PERMEASE"/>
    <property type="match status" value="1"/>
</dbReference>
<dbReference type="Pfam" id="PF03739">
    <property type="entry name" value="LptF_LptG"/>
    <property type="match status" value="1"/>
</dbReference>
<accession>O66685</accession>
<comment type="subcellular location">
    <subcellularLocation>
        <location evidence="2">Cell membrane</location>
        <topology evidence="2">Multi-pass membrane protein</topology>
    </subcellularLocation>
</comment>
<evidence type="ECO:0000255" key="1"/>
<evidence type="ECO:0000305" key="2"/>